<keyword id="KW-0342">GTP-binding</keyword>
<keyword id="KW-0547">Nucleotide-binding</keyword>
<keyword id="KW-0677">Repeat</keyword>
<keyword id="KW-0690">Ribosome biogenesis</keyword>
<sequence length="436" mass="48726">MPKPVIAIVGRPNVGKSTIFNRIVGERVSIVEDIPGITRDRIYSAGEWLNHEFNIIDTGGIDIGDEPFLTQIRQQAEVAIDEADVIIFMTNGRDGVTAADEEVAKILYRSKKPIVLAVNKVDNPEMRSDIYDFYSLGFGEPFPISGTHGLGLGDLLDEAANHFPKIEEEAYDDETIRFSLIGRPNVGKSSLVNALLGQERVIVSNIAGTTRDAVDTPYSKDDQDYVIIDTAGMRKKGKVYESTEKYSVLRALRAIERSDVVLVVLDGEEGIIEQDKKIAGYAHDSGRAVIIVVNKWDAVKKDEKTMKAFEENIRAHFQFLDYAPIVFLSAKTKKRTQTLLPVINEVNESHSIRVQTNVLNDVIMDAVAMNPTPTHNGSRLKIFYATQVAVKPPTFVVFVNDTELMHFSYERFLKNRLREAFGFVGTPIHIIARARD</sequence>
<evidence type="ECO:0000255" key="1">
    <source>
        <dbReference type="HAMAP-Rule" id="MF_00195"/>
    </source>
</evidence>
<organism>
    <name type="scientific">Bacillus cereus (strain G9842)</name>
    <dbReference type="NCBI Taxonomy" id="405531"/>
    <lineage>
        <taxon>Bacteria</taxon>
        <taxon>Bacillati</taxon>
        <taxon>Bacillota</taxon>
        <taxon>Bacilli</taxon>
        <taxon>Bacillales</taxon>
        <taxon>Bacillaceae</taxon>
        <taxon>Bacillus</taxon>
        <taxon>Bacillus cereus group</taxon>
    </lineage>
</organism>
<gene>
    <name evidence="1" type="primary">der</name>
    <name type="synonym">engA</name>
    <name type="ordered locus">BCG9842_B3785</name>
</gene>
<proteinExistence type="inferred from homology"/>
<feature type="chain" id="PRO_1000118636" description="GTPase Der">
    <location>
        <begin position="1"/>
        <end position="436"/>
    </location>
</feature>
<feature type="domain" description="EngA-type G 1">
    <location>
        <begin position="4"/>
        <end position="167"/>
    </location>
</feature>
<feature type="domain" description="EngA-type G 2">
    <location>
        <begin position="176"/>
        <end position="351"/>
    </location>
</feature>
<feature type="domain" description="KH-like" evidence="1">
    <location>
        <begin position="352"/>
        <end position="436"/>
    </location>
</feature>
<feature type="binding site" evidence="1">
    <location>
        <begin position="10"/>
        <end position="17"/>
    </location>
    <ligand>
        <name>GTP</name>
        <dbReference type="ChEBI" id="CHEBI:37565"/>
        <label>1</label>
    </ligand>
</feature>
<feature type="binding site" evidence="1">
    <location>
        <begin position="57"/>
        <end position="61"/>
    </location>
    <ligand>
        <name>GTP</name>
        <dbReference type="ChEBI" id="CHEBI:37565"/>
        <label>1</label>
    </ligand>
</feature>
<feature type="binding site" evidence="1">
    <location>
        <begin position="119"/>
        <end position="122"/>
    </location>
    <ligand>
        <name>GTP</name>
        <dbReference type="ChEBI" id="CHEBI:37565"/>
        <label>1</label>
    </ligand>
</feature>
<feature type="binding site" evidence="1">
    <location>
        <begin position="182"/>
        <end position="189"/>
    </location>
    <ligand>
        <name>GTP</name>
        <dbReference type="ChEBI" id="CHEBI:37565"/>
        <label>2</label>
    </ligand>
</feature>
<feature type="binding site" evidence="1">
    <location>
        <begin position="229"/>
        <end position="233"/>
    </location>
    <ligand>
        <name>GTP</name>
        <dbReference type="ChEBI" id="CHEBI:37565"/>
        <label>2</label>
    </ligand>
</feature>
<feature type="binding site" evidence="1">
    <location>
        <begin position="294"/>
        <end position="297"/>
    </location>
    <ligand>
        <name>GTP</name>
        <dbReference type="ChEBI" id="CHEBI:37565"/>
        <label>2</label>
    </ligand>
</feature>
<comment type="function">
    <text evidence="1">GTPase that plays an essential role in the late steps of ribosome biogenesis.</text>
</comment>
<comment type="subunit">
    <text evidence="1">Associates with the 50S ribosomal subunit.</text>
</comment>
<comment type="similarity">
    <text evidence="1">Belongs to the TRAFAC class TrmE-Era-EngA-EngB-Septin-like GTPase superfamily. EngA (Der) GTPase family.</text>
</comment>
<name>DER_BACC2</name>
<accession>B7IP82</accession>
<protein>
    <recommendedName>
        <fullName evidence="1">GTPase Der</fullName>
    </recommendedName>
    <alternativeName>
        <fullName evidence="1">GTP-binding protein EngA</fullName>
    </alternativeName>
</protein>
<reference key="1">
    <citation type="submission" date="2008-10" db="EMBL/GenBank/DDBJ databases">
        <title>Genome sequence of Bacillus cereus G9842.</title>
        <authorList>
            <person name="Dodson R.J."/>
            <person name="Durkin A.S."/>
            <person name="Rosovitz M.J."/>
            <person name="Rasko D.A."/>
            <person name="Hoffmaster A."/>
            <person name="Ravel J."/>
            <person name="Sutton G."/>
        </authorList>
    </citation>
    <scope>NUCLEOTIDE SEQUENCE [LARGE SCALE GENOMIC DNA]</scope>
    <source>
        <strain>G9842</strain>
    </source>
</reference>
<dbReference type="EMBL" id="CP001186">
    <property type="protein sequence ID" value="ACK98237.1"/>
    <property type="molecule type" value="Genomic_DNA"/>
</dbReference>
<dbReference type="RefSeq" id="WP_001125890.1">
    <property type="nucleotide sequence ID" value="NC_011772.1"/>
</dbReference>
<dbReference type="SMR" id="B7IP82"/>
<dbReference type="GeneID" id="72448266"/>
<dbReference type="KEGG" id="bcg:BCG9842_B3785"/>
<dbReference type="HOGENOM" id="CLU_016077_6_2_9"/>
<dbReference type="Proteomes" id="UP000006744">
    <property type="component" value="Chromosome"/>
</dbReference>
<dbReference type="GO" id="GO:0005525">
    <property type="term" value="F:GTP binding"/>
    <property type="evidence" value="ECO:0007669"/>
    <property type="project" value="UniProtKB-UniRule"/>
</dbReference>
<dbReference type="GO" id="GO:0043022">
    <property type="term" value="F:ribosome binding"/>
    <property type="evidence" value="ECO:0007669"/>
    <property type="project" value="TreeGrafter"/>
</dbReference>
<dbReference type="GO" id="GO:0042254">
    <property type="term" value="P:ribosome biogenesis"/>
    <property type="evidence" value="ECO:0007669"/>
    <property type="project" value="UniProtKB-KW"/>
</dbReference>
<dbReference type="CDD" id="cd01894">
    <property type="entry name" value="EngA1"/>
    <property type="match status" value="1"/>
</dbReference>
<dbReference type="CDD" id="cd01895">
    <property type="entry name" value="EngA2"/>
    <property type="match status" value="1"/>
</dbReference>
<dbReference type="FunFam" id="3.30.300.20:FF:000004">
    <property type="entry name" value="GTPase Der"/>
    <property type="match status" value="1"/>
</dbReference>
<dbReference type="FunFam" id="3.40.50.300:FF:000040">
    <property type="entry name" value="GTPase Der"/>
    <property type="match status" value="1"/>
</dbReference>
<dbReference type="FunFam" id="3.40.50.300:FF:000057">
    <property type="entry name" value="GTPase Der"/>
    <property type="match status" value="1"/>
</dbReference>
<dbReference type="Gene3D" id="3.30.300.20">
    <property type="match status" value="1"/>
</dbReference>
<dbReference type="Gene3D" id="3.40.50.300">
    <property type="entry name" value="P-loop containing nucleotide triphosphate hydrolases"/>
    <property type="match status" value="2"/>
</dbReference>
<dbReference type="HAMAP" id="MF_00195">
    <property type="entry name" value="GTPase_Der"/>
    <property type="match status" value="1"/>
</dbReference>
<dbReference type="InterPro" id="IPR031166">
    <property type="entry name" value="G_ENGA"/>
</dbReference>
<dbReference type="InterPro" id="IPR006073">
    <property type="entry name" value="GTP-bd"/>
</dbReference>
<dbReference type="InterPro" id="IPR016484">
    <property type="entry name" value="GTPase_Der"/>
</dbReference>
<dbReference type="InterPro" id="IPR032859">
    <property type="entry name" value="KH_dom-like"/>
</dbReference>
<dbReference type="InterPro" id="IPR015946">
    <property type="entry name" value="KH_dom-like_a/b"/>
</dbReference>
<dbReference type="InterPro" id="IPR027417">
    <property type="entry name" value="P-loop_NTPase"/>
</dbReference>
<dbReference type="InterPro" id="IPR005225">
    <property type="entry name" value="Small_GTP-bd"/>
</dbReference>
<dbReference type="NCBIfam" id="TIGR03594">
    <property type="entry name" value="GTPase_EngA"/>
    <property type="match status" value="1"/>
</dbReference>
<dbReference type="NCBIfam" id="TIGR00231">
    <property type="entry name" value="small_GTP"/>
    <property type="match status" value="2"/>
</dbReference>
<dbReference type="PANTHER" id="PTHR43834">
    <property type="entry name" value="GTPASE DER"/>
    <property type="match status" value="1"/>
</dbReference>
<dbReference type="PANTHER" id="PTHR43834:SF6">
    <property type="entry name" value="GTPASE DER"/>
    <property type="match status" value="1"/>
</dbReference>
<dbReference type="Pfam" id="PF14714">
    <property type="entry name" value="KH_dom-like"/>
    <property type="match status" value="1"/>
</dbReference>
<dbReference type="Pfam" id="PF01926">
    <property type="entry name" value="MMR_HSR1"/>
    <property type="match status" value="2"/>
</dbReference>
<dbReference type="PIRSF" id="PIRSF006485">
    <property type="entry name" value="GTP-binding_EngA"/>
    <property type="match status" value="1"/>
</dbReference>
<dbReference type="PRINTS" id="PR00326">
    <property type="entry name" value="GTP1OBG"/>
</dbReference>
<dbReference type="SUPFAM" id="SSF52540">
    <property type="entry name" value="P-loop containing nucleoside triphosphate hydrolases"/>
    <property type="match status" value="2"/>
</dbReference>
<dbReference type="PROSITE" id="PS51712">
    <property type="entry name" value="G_ENGA"/>
    <property type="match status" value="2"/>
</dbReference>